<dbReference type="EC" id="4.2.1.59" evidence="1"/>
<dbReference type="EMBL" id="AE017180">
    <property type="protein sequence ID" value="AAR35641.1"/>
    <property type="molecule type" value="Genomic_DNA"/>
</dbReference>
<dbReference type="RefSeq" id="NP_953314.1">
    <property type="nucleotide sequence ID" value="NC_002939.5"/>
</dbReference>
<dbReference type="RefSeq" id="WP_010942905.1">
    <property type="nucleotide sequence ID" value="NC_002939.5"/>
</dbReference>
<dbReference type="SMR" id="P61453"/>
<dbReference type="FunCoup" id="P61453">
    <property type="interactions" value="475"/>
</dbReference>
<dbReference type="STRING" id="243231.GSU2265"/>
<dbReference type="EnsemblBacteria" id="AAR35641">
    <property type="protein sequence ID" value="AAR35641"/>
    <property type="gene ID" value="GSU2265"/>
</dbReference>
<dbReference type="KEGG" id="gsu:GSU2265"/>
<dbReference type="PATRIC" id="fig|243231.5.peg.2296"/>
<dbReference type="eggNOG" id="COG0764">
    <property type="taxonomic scope" value="Bacteria"/>
</dbReference>
<dbReference type="HOGENOM" id="CLU_078912_3_0_7"/>
<dbReference type="InParanoid" id="P61453"/>
<dbReference type="OrthoDB" id="9772788at2"/>
<dbReference type="Proteomes" id="UP000000577">
    <property type="component" value="Chromosome"/>
</dbReference>
<dbReference type="GO" id="GO:0005737">
    <property type="term" value="C:cytoplasm"/>
    <property type="evidence" value="ECO:0007669"/>
    <property type="project" value="UniProtKB-SubCell"/>
</dbReference>
<dbReference type="GO" id="GO:0016020">
    <property type="term" value="C:membrane"/>
    <property type="evidence" value="ECO:0007669"/>
    <property type="project" value="GOC"/>
</dbReference>
<dbReference type="GO" id="GO:0019171">
    <property type="term" value="F:(3R)-hydroxyacyl-[acyl-carrier-protein] dehydratase activity"/>
    <property type="evidence" value="ECO:0007669"/>
    <property type="project" value="UniProtKB-EC"/>
</dbReference>
<dbReference type="GO" id="GO:0006633">
    <property type="term" value="P:fatty acid biosynthetic process"/>
    <property type="evidence" value="ECO:0007669"/>
    <property type="project" value="UniProtKB-UniRule"/>
</dbReference>
<dbReference type="GO" id="GO:0009245">
    <property type="term" value="P:lipid A biosynthetic process"/>
    <property type="evidence" value="ECO:0007669"/>
    <property type="project" value="UniProtKB-UniRule"/>
</dbReference>
<dbReference type="CDD" id="cd01288">
    <property type="entry name" value="FabZ"/>
    <property type="match status" value="1"/>
</dbReference>
<dbReference type="FunFam" id="3.10.129.10:FF:000001">
    <property type="entry name" value="3-hydroxyacyl-[acyl-carrier-protein] dehydratase FabZ"/>
    <property type="match status" value="1"/>
</dbReference>
<dbReference type="Gene3D" id="3.10.129.10">
    <property type="entry name" value="Hotdog Thioesterase"/>
    <property type="match status" value="1"/>
</dbReference>
<dbReference type="HAMAP" id="MF_00406">
    <property type="entry name" value="FabZ"/>
    <property type="match status" value="1"/>
</dbReference>
<dbReference type="InterPro" id="IPR013114">
    <property type="entry name" value="FabA_FabZ"/>
</dbReference>
<dbReference type="InterPro" id="IPR010084">
    <property type="entry name" value="FabZ"/>
</dbReference>
<dbReference type="InterPro" id="IPR029069">
    <property type="entry name" value="HotDog_dom_sf"/>
</dbReference>
<dbReference type="NCBIfam" id="TIGR01750">
    <property type="entry name" value="fabZ"/>
    <property type="match status" value="1"/>
</dbReference>
<dbReference type="NCBIfam" id="NF000582">
    <property type="entry name" value="PRK00006.1"/>
    <property type="match status" value="1"/>
</dbReference>
<dbReference type="PANTHER" id="PTHR30272">
    <property type="entry name" value="3-HYDROXYACYL-[ACYL-CARRIER-PROTEIN] DEHYDRATASE"/>
    <property type="match status" value="1"/>
</dbReference>
<dbReference type="PANTHER" id="PTHR30272:SF1">
    <property type="entry name" value="3-HYDROXYACYL-[ACYL-CARRIER-PROTEIN] DEHYDRATASE"/>
    <property type="match status" value="1"/>
</dbReference>
<dbReference type="Pfam" id="PF07977">
    <property type="entry name" value="FabA"/>
    <property type="match status" value="1"/>
</dbReference>
<dbReference type="SUPFAM" id="SSF54637">
    <property type="entry name" value="Thioesterase/thiol ester dehydrase-isomerase"/>
    <property type="match status" value="1"/>
</dbReference>
<feature type="chain" id="PRO_0000091682" description="3-hydroxyacyl-[acyl-carrier-protein] dehydratase FabZ">
    <location>
        <begin position="1"/>
        <end position="150"/>
    </location>
</feature>
<feature type="active site" evidence="1">
    <location>
        <position position="51"/>
    </location>
</feature>
<evidence type="ECO:0000255" key="1">
    <source>
        <dbReference type="HAMAP-Rule" id="MF_00406"/>
    </source>
</evidence>
<comment type="function">
    <text evidence="1">Involved in unsaturated fatty acids biosynthesis. Catalyzes the dehydration of short chain beta-hydroxyacyl-ACPs and long chain saturated and unsaturated beta-hydroxyacyl-ACPs.</text>
</comment>
<comment type="catalytic activity">
    <reaction evidence="1">
        <text>a (3R)-hydroxyacyl-[ACP] = a (2E)-enoyl-[ACP] + H2O</text>
        <dbReference type="Rhea" id="RHEA:13097"/>
        <dbReference type="Rhea" id="RHEA-COMP:9925"/>
        <dbReference type="Rhea" id="RHEA-COMP:9945"/>
        <dbReference type="ChEBI" id="CHEBI:15377"/>
        <dbReference type="ChEBI" id="CHEBI:78784"/>
        <dbReference type="ChEBI" id="CHEBI:78827"/>
        <dbReference type="EC" id="4.2.1.59"/>
    </reaction>
</comment>
<comment type="subcellular location">
    <subcellularLocation>
        <location evidence="1">Cytoplasm</location>
    </subcellularLocation>
</comment>
<comment type="similarity">
    <text evidence="1">Belongs to the thioester dehydratase family. FabZ subfamily.</text>
</comment>
<accession>P61453</accession>
<sequence length="150" mass="16803">METVFDINEIMKILPHRYPFLLVDRIVEYVAGERIVGIKNVSINEPFFQGHFPGHPVMPGVLIVEAMAQVGGIYAYVTLGDEVRDKVCYFASIDNVKFRKPVVPGDQLRIEVTISGCKRGIWCFSARATVNGKLVTEAELKATFADKEKL</sequence>
<name>FABZ_GEOSL</name>
<proteinExistence type="inferred from homology"/>
<keyword id="KW-0963">Cytoplasm</keyword>
<keyword id="KW-0441">Lipid A biosynthesis</keyword>
<keyword id="KW-0444">Lipid biosynthesis</keyword>
<keyword id="KW-0443">Lipid metabolism</keyword>
<keyword id="KW-0456">Lyase</keyword>
<keyword id="KW-1185">Reference proteome</keyword>
<reference key="1">
    <citation type="journal article" date="2003" name="Science">
        <title>Genome of Geobacter sulfurreducens: metal reduction in subsurface environments.</title>
        <authorList>
            <person name="Methe B.A."/>
            <person name="Nelson K.E."/>
            <person name="Eisen J.A."/>
            <person name="Paulsen I.T."/>
            <person name="Nelson W.C."/>
            <person name="Heidelberg J.F."/>
            <person name="Wu D."/>
            <person name="Wu M."/>
            <person name="Ward N.L."/>
            <person name="Beanan M.J."/>
            <person name="Dodson R.J."/>
            <person name="Madupu R."/>
            <person name="Brinkac L.M."/>
            <person name="Daugherty S.C."/>
            <person name="DeBoy R.T."/>
            <person name="Durkin A.S."/>
            <person name="Gwinn M.L."/>
            <person name="Kolonay J.F."/>
            <person name="Sullivan S.A."/>
            <person name="Haft D.H."/>
            <person name="Selengut J."/>
            <person name="Davidsen T.M."/>
            <person name="Zafar N."/>
            <person name="White O."/>
            <person name="Tran B."/>
            <person name="Romero C."/>
            <person name="Forberger H.A."/>
            <person name="Weidman J.F."/>
            <person name="Khouri H.M."/>
            <person name="Feldblyum T.V."/>
            <person name="Utterback T.R."/>
            <person name="Van Aken S.E."/>
            <person name="Lovley D.R."/>
            <person name="Fraser C.M."/>
        </authorList>
    </citation>
    <scope>NUCLEOTIDE SEQUENCE [LARGE SCALE GENOMIC DNA]</scope>
    <source>
        <strain>ATCC 51573 / DSM 12127 / PCA</strain>
    </source>
</reference>
<organism>
    <name type="scientific">Geobacter sulfurreducens (strain ATCC 51573 / DSM 12127 / PCA)</name>
    <dbReference type="NCBI Taxonomy" id="243231"/>
    <lineage>
        <taxon>Bacteria</taxon>
        <taxon>Pseudomonadati</taxon>
        <taxon>Thermodesulfobacteriota</taxon>
        <taxon>Desulfuromonadia</taxon>
        <taxon>Geobacterales</taxon>
        <taxon>Geobacteraceae</taxon>
        <taxon>Geobacter</taxon>
    </lineage>
</organism>
<protein>
    <recommendedName>
        <fullName evidence="1">3-hydroxyacyl-[acyl-carrier-protein] dehydratase FabZ</fullName>
        <ecNumber evidence="1">4.2.1.59</ecNumber>
    </recommendedName>
    <alternativeName>
        <fullName evidence="1">(3R)-hydroxymyristoyl-[acyl-carrier-protein] dehydratase</fullName>
        <shortName evidence="1">(3R)-hydroxymyristoyl-ACP dehydrase</shortName>
    </alternativeName>
    <alternativeName>
        <fullName evidence="1">Beta-hydroxyacyl-ACP dehydratase</fullName>
    </alternativeName>
</protein>
<gene>
    <name evidence="1" type="primary">fabZ</name>
    <name type="ordered locus">GSU2265</name>
</gene>